<name>NTPP_HELPY</name>
<comment type="function">
    <text evidence="1">Nucleoside triphosphate pyrophosphatase. May have a dual role in cell division arrest and in preventing the incorporation of modified nucleotides into cellular nucleic acids.</text>
</comment>
<comment type="catalytic activity">
    <reaction evidence="1">
        <text>a ribonucleoside 5'-triphosphate + H2O = a ribonucleoside 5'-phosphate + diphosphate + H(+)</text>
        <dbReference type="Rhea" id="RHEA:23996"/>
        <dbReference type="ChEBI" id="CHEBI:15377"/>
        <dbReference type="ChEBI" id="CHEBI:15378"/>
        <dbReference type="ChEBI" id="CHEBI:33019"/>
        <dbReference type="ChEBI" id="CHEBI:58043"/>
        <dbReference type="ChEBI" id="CHEBI:61557"/>
        <dbReference type="EC" id="3.6.1.9"/>
    </reaction>
</comment>
<comment type="catalytic activity">
    <reaction evidence="1">
        <text>a 2'-deoxyribonucleoside 5'-triphosphate + H2O = a 2'-deoxyribonucleoside 5'-phosphate + diphosphate + H(+)</text>
        <dbReference type="Rhea" id="RHEA:44644"/>
        <dbReference type="ChEBI" id="CHEBI:15377"/>
        <dbReference type="ChEBI" id="CHEBI:15378"/>
        <dbReference type="ChEBI" id="CHEBI:33019"/>
        <dbReference type="ChEBI" id="CHEBI:61560"/>
        <dbReference type="ChEBI" id="CHEBI:65317"/>
        <dbReference type="EC" id="3.6.1.9"/>
    </reaction>
</comment>
<comment type="cofactor">
    <cofactor evidence="1">
        <name>a divalent metal cation</name>
        <dbReference type="ChEBI" id="CHEBI:60240"/>
    </cofactor>
</comment>
<comment type="subcellular location">
    <subcellularLocation>
        <location evidence="1">Cytoplasm</location>
    </subcellularLocation>
</comment>
<comment type="similarity">
    <text evidence="1">Belongs to the Maf family.</text>
</comment>
<protein>
    <recommendedName>
        <fullName evidence="1">Nucleoside triphosphate pyrophosphatase</fullName>
        <ecNumber evidence="1">3.6.1.9</ecNumber>
    </recommendedName>
    <alternativeName>
        <fullName evidence="1">Nucleotide pyrophosphatase</fullName>
        <shortName evidence="1">Nucleotide PPase</shortName>
    </alternativeName>
</protein>
<gene>
    <name type="ordered locus">HP_1240</name>
</gene>
<evidence type="ECO:0000255" key="1">
    <source>
        <dbReference type="HAMAP-Rule" id="MF_00528"/>
    </source>
</evidence>
<sequence>MELILGSQSSTRANLLKEHGIKFEQKALYFDEESLKTTDPREFVYLACKGKLEKAKELLANNCAIVVADSVVSVGNRMQRKAKNKQEALEFLKRQNGHEIEVLTCSALISPVLEWLDLSVFRARLKAFDPSEIEKYLESGLWQESAGCVRLEDFHKPYIKSSSENLSVGLGLNVEGLLGALKLGAKLSSL</sequence>
<dbReference type="EC" id="3.6.1.9" evidence="1"/>
<dbReference type="EMBL" id="AE000511">
    <property type="protein sequence ID" value="AAD08284.1"/>
    <property type="molecule type" value="Genomic_DNA"/>
</dbReference>
<dbReference type="PIR" id="H64674">
    <property type="entry name" value="H64674"/>
</dbReference>
<dbReference type="RefSeq" id="NP_208032.1">
    <property type="nucleotide sequence ID" value="NC_000915.1"/>
</dbReference>
<dbReference type="SMR" id="O25838"/>
<dbReference type="FunCoup" id="O25838">
    <property type="interactions" value="239"/>
</dbReference>
<dbReference type="STRING" id="85962.HP_1240"/>
<dbReference type="PaxDb" id="85962-C694_06395"/>
<dbReference type="EnsemblBacteria" id="AAD08284">
    <property type="protein sequence ID" value="AAD08284"/>
    <property type="gene ID" value="HP_1240"/>
</dbReference>
<dbReference type="KEGG" id="heo:C694_06395"/>
<dbReference type="KEGG" id="hpy:HP_1240"/>
<dbReference type="PATRIC" id="fig|85962.47.peg.1329"/>
<dbReference type="eggNOG" id="COG0424">
    <property type="taxonomic scope" value="Bacteria"/>
</dbReference>
<dbReference type="InParanoid" id="O25838"/>
<dbReference type="OrthoDB" id="5339137at2"/>
<dbReference type="PhylomeDB" id="O25838"/>
<dbReference type="Proteomes" id="UP000000429">
    <property type="component" value="Chromosome"/>
</dbReference>
<dbReference type="GO" id="GO:0005737">
    <property type="term" value="C:cytoplasm"/>
    <property type="evidence" value="ECO:0007669"/>
    <property type="project" value="UniProtKB-SubCell"/>
</dbReference>
<dbReference type="GO" id="GO:0047429">
    <property type="term" value="F:nucleoside triphosphate diphosphatase activity"/>
    <property type="evidence" value="ECO:0000318"/>
    <property type="project" value="GO_Central"/>
</dbReference>
<dbReference type="GO" id="GO:0009117">
    <property type="term" value="P:nucleotide metabolic process"/>
    <property type="evidence" value="ECO:0007669"/>
    <property type="project" value="UniProtKB-KW"/>
</dbReference>
<dbReference type="FunFam" id="3.90.950.10:FF:000013">
    <property type="entry name" value="Nucleoside triphosphate pyrophosphatase"/>
    <property type="match status" value="1"/>
</dbReference>
<dbReference type="Gene3D" id="3.90.950.10">
    <property type="match status" value="1"/>
</dbReference>
<dbReference type="HAMAP" id="MF_00528">
    <property type="entry name" value="Maf"/>
    <property type="match status" value="1"/>
</dbReference>
<dbReference type="InterPro" id="IPR029001">
    <property type="entry name" value="ITPase-like_fam"/>
</dbReference>
<dbReference type="InterPro" id="IPR003697">
    <property type="entry name" value="Maf-like"/>
</dbReference>
<dbReference type="NCBIfam" id="TIGR00172">
    <property type="entry name" value="maf"/>
    <property type="match status" value="1"/>
</dbReference>
<dbReference type="NCBIfam" id="NF003141">
    <property type="entry name" value="PRK04056.1"/>
    <property type="match status" value="1"/>
</dbReference>
<dbReference type="PANTHER" id="PTHR43213">
    <property type="entry name" value="BIFUNCTIONAL DTTP/UTP PYROPHOSPHATASE/METHYLTRANSFERASE PROTEIN-RELATED"/>
    <property type="match status" value="1"/>
</dbReference>
<dbReference type="PANTHER" id="PTHR43213:SF5">
    <property type="entry name" value="BIFUNCTIONAL DTTP_UTP PYROPHOSPHATASE_METHYLTRANSFERASE PROTEIN-RELATED"/>
    <property type="match status" value="1"/>
</dbReference>
<dbReference type="Pfam" id="PF02545">
    <property type="entry name" value="Maf"/>
    <property type="match status" value="1"/>
</dbReference>
<dbReference type="PIRSF" id="PIRSF006305">
    <property type="entry name" value="Maf"/>
    <property type="match status" value="1"/>
</dbReference>
<dbReference type="SUPFAM" id="SSF52972">
    <property type="entry name" value="ITPase-like"/>
    <property type="match status" value="1"/>
</dbReference>
<organism>
    <name type="scientific">Helicobacter pylori (strain ATCC 700392 / 26695)</name>
    <name type="common">Campylobacter pylori</name>
    <dbReference type="NCBI Taxonomy" id="85962"/>
    <lineage>
        <taxon>Bacteria</taxon>
        <taxon>Pseudomonadati</taxon>
        <taxon>Campylobacterota</taxon>
        <taxon>Epsilonproteobacteria</taxon>
        <taxon>Campylobacterales</taxon>
        <taxon>Helicobacteraceae</taxon>
        <taxon>Helicobacter</taxon>
    </lineage>
</organism>
<keyword id="KW-0963">Cytoplasm</keyword>
<keyword id="KW-0378">Hydrolase</keyword>
<keyword id="KW-0546">Nucleotide metabolism</keyword>
<keyword id="KW-1185">Reference proteome</keyword>
<feature type="chain" id="PRO_0000123024" description="Nucleoside triphosphate pyrophosphatase">
    <location>
        <begin position="1"/>
        <end position="190"/>
    </location>
</feature>
<feature type="active site" description="Proton acceptor" evidence="1">
    <location>
        <position position="69"/>
    </location>
</feature>
<proteinExistence type="inferred from homology"/>
<accession>O25838</accession>
<reference key="1">
    <citation type="journal article" date="1997" name="Nature">
        <title>The complete genome sequence of the gastric pathogen Helicobacter pylori.</title>
        <authorList>
            <person name="Tomb J.-F."/>
            <person name="White O."/>
            <person name="Kerlavage A.R."/>
            <person name="Clayton R.A."/>
            <person name="Sutton G.G."/>
            <person name="Fleischmann R.D."/>
            <person name="Ketchum K.A."/>
            <person name="Klenk H.-P."/>
            <person name="Gill S.R."/>
            <person name="Dougherty B.A."/>
            <person name="Nelson K.E."/>
            <person name="Quackenbush J."/>
            <person name="Zhou L."/>
            <person name="Kirkness E.F."/>
            <person name="Peterson S.N."/>
            <person name="Loftus B.J."/>
            <person name="Richardson D.L."/>
            <person name="Dodson R.J."/>
            <person name="Khalak H.G."/>
            <person name="Glodek A."/>
            <person name="McKenney K."/>
            <person name="FitzGerald L.M."/>
            <person name="Lee N."/>
            <person name="Adams M.D."/>
            <person name="Hickey E.K."/>
            <person name="Berg D.E."/>
            <person name="Gocayne J.D."/>
            <person name="Utterback T.R."/>
            <person name="Peterson J.D."/>
            <person name="Kelley J.M."/>
            <person name="Cotton M.D."/>
            <person name="Weidman J.F."/>
            <person name="Fujii C."/>
            <person name="Bowman C."/>
            <person name="Watthey L."/>
            <person name="Wallin E."/>
            <person name="Hayes W.S."/>
            <person name="Borodovsky M."/>
            <person name="Karp P.D."/>
            <person name="Smith H.O."/>
            <person name="Fraser C.M."/>
            <person name="Venter J.C."/>
        </authorList>
    </citation>
    <scope>NUCLEOTIDE SEQUENCE [LARGE SCALE GENOMIC DNA]</scope>
    <source>
        <strain>ATCC 700392 / 26695</strain>
    </source>
</reference>